<gene>
    <name evidence="1" type="primary">mtlD</name>
    <name type="ordered locus">VCM66_A1004</name>
</gene>
<keyword id="KW-0520">NAD</keyword>
<keyword id="KW-0560">Oxidoreductase</keyword>
<feature type="chain" id="PRO_1000124395" description="Mannitol-1-phosphate 5-dehydrogenase">
    <location>
        <begin position="1"/>
        <end position="384"/>
    </location>
</feature>
<feature type="binding site" evidence="1">
    <location>
        <begin position="5"/>
        <end position="16"/>
    </location>
    <ligand>
        <name>NAD(+)</name>
        <dbReference type="ChEBI" id="CHEBI:57540"/>
    </ligand>
</feature>
<dbReference type="EC" id="1.1.1.17" evidence="1"/>
<dbReference type="EMBL" id="CP001234">
    <property type="protein sequence ID" value="ACP07963.1"/>
    <property type="molecule type" value="Genomic_DNA"/>
</dbReference>
<dbReference type="RefSeq" id="WP_000739122.1">
    <property type="nucleotide sequence ID" value="NC_012580.1"/>
</dbReference>
<dbReference type="SMR" id="C3LWV8"/>
<dbReference type="KEGG" id="vcm:VCM66_A1004"/>
<dbReference type="HOGENOM" id="CLU_036089_2_0_6"/>
<dbReference type="Proteomes" id="UP000001217">
    <property type="component" value="Chromosome II"/>
</dbReference>
<dbReference type="GO" id="GO:0005829">
    <property type="term" value="C:cytosol"/>
    <property type="evidence" value="ECO:0007669"/>
    <property type="project" value="TreeGrafter"/>
</dbReference>
<dbReference type="GO" id="GO:0008926">
    <property type="term" value="F:mannitol-1-phosphate 5-dehydrogenase activity"/>
    <property type="evidence" value="ECO:0007669"/>
    <property type="project" value="UniProtKB-UniRule"/>
</dbReference>
<dbReference type="GO" id="GO:0019592">
    <property type="term" value="P:mannitol catabolic process"/>
    <property type="evidence" value="ECO:0007669"/>
    <property type="project" value="TreeGrafter"/>
</dbReference>
<dbReference type="FunFam" id="1.10.1040.10:FF:000009">
    <property type="entry name" value="Mannitol-1-phosphate 5-dehydrogenase"/>
    <property type="match status" value="1"/>
</dbReference>
<dbReference type="FunFam" id="3.40.50.720:FF:000075">
    <property type="entry name" value="Mannitol-1-phosphate 5-dehydrogenase"/>
    <property type="match status" value="1"/>
</dbReference>
<dbReference type="Gene3D" id="1.10.1040.10">
    <property type="entry name" value="N-(1-d-carboxylethyl)-l-norvaline Dehydrogenase, domain 2"/>
    <property type="match status" value="1"/>
</dbReference>
<dbReference type="Gene3D" id="3.40.50.720">
    <property type="entry name" value="NAD(P)-binding Rossmann-like Domain"/>
    <property type="match status" value="1"/>
</dbReference>
<dbReference type="HAMAP" id="MF_00196">
    <property type="entry name" value="Mannitol_dehydrog"/>
    <property type="match status" value="1"/>
</dbReference>
<dbReference type="InterPro" id="IPR008927">
    <property type="entry name" value="6-PGluconate_DH-like_C_sf"/>
</dbReference>
<dbReference type="InterPro" id="IPR013328">
    <property type="entry name" value="6PGD_dom2"/>
</dbReference>
<dbReference type="InterPro" id="IPR023028">
    <property type="entry name" value="Mannitol_1_phos_5_DH"/>
</dbReference>
<dbReference type="InterPro" id="IPR000669">
    <property type="entry name" value="Mannitol_DH"/>
</dbReference>
<dbReference type="InterPro" id="IPR013118">
    <property type="entry name" value="Mannitol_DH_C"/>
</dbReference>
<dbReference type="InterPro" id="IPR023027">
    <property type="entry name" value="Mannitol_DH_CS"/>
</dbReference>
<dbReference type="InterPro" id="IPR013131">
    <property type="entry name" value="Mannitol_DH_N"/>
</dbReference>
<dbReference type="InterPro" id="IPR036291">
    <property type="entry name" value="NAD(P)-bd_dom_sf"/>
</dbReference>
<dbReference type="NCBIfam" id="NF002646">
    <property type="entry name" value="PRK02318.1-2"/>
    <property type="match status" value="1"/>
</dbReference>
<dbReference type="NCBIfam" id="NF002647">
    <property type="entry name" value="PRK02318.1-3"/>
    <property type="match status" value="1"/>
</dbReference>
<dbReference type="NCBIfam" id="NF002650">
    <property type="entry name" value="PRK02318.2-2"/>
    <property type="match status" value="1"/>
</dbReference>
<dbReference type="NCBIfam" id="NF002652">
    <property type="entry name" value="PRK02318.2-5"/>
    <property type="match status" value="1"/>
</dbReference>
<dbReference type="PANTHER" id="PTHR30524:SF0">
    <property type="entry name" value="ALTRONATE OXIDOREDUCTASE-RELATED"/>
    <property type="match status" value="1"/>
</dbReference>
<dbReference type="PANTHER" id="PTHR30524">
    <property type="entry name" value="MANNITOL-1-PHOSPHATE 5-DEHYDROGENASE"/>
    <property type="match status" value="1"/>
</dbReference>
<dbReference type="Pfam" id="PF01232">
    <property type="entry name" value="Mannitol_dh"/>
    <property type="match status" value="1"/>
</dbReference>
<dbReference type="Pfam" id="PF08125">
    <property type="entry name" value="Mannitol_dh_C"/>
    <property type="match status" value="1"/>
</dbReference>
<dbReference type="PRINTS" id="PR00084">
    <property type="entry name" value="MTLDHDRGNASE"/>
</dbReference>
<dbReference type="SUPFAM" id="SSF48179">
    <property type="entry name" value="6-phosphogluconate dehydrogenase C-terminal domain-like"/>
    <property type="match status" value="1"/>
</dbReference>
<dbReference type="SUPFAM" id="SSF51735">
    <property type="entry name" value="NAD(P)-binding Rossmann-fold domains"/>
    <property type="match status" value="1"/>
</dbReference>
<dbReference type="PROSITE" id="PS00974">
    <property type="entry name" value="MANNITOL_DHGENASE"/>
    <property type="match status" value="1"/>
</dbReference>
<accession>C3LWV8</accession>
<reference key="1">
    <citation type="journal article" date="2008" name="PLoS ONE">
        <title>A recalibrated molecular clock and independent origins for the cholera pandemic clones.</title>
        <authorList>
            <person name="Feng L."/>
            <person name="Reeves P.R."/>
            <person name="Lan R."/>
            <person name="Ren Y."/>
            <person name="Gao C."/>
            <person name="Zhou Z."/>
            <person name="Ren Y."/>
            <person name="Cheng J."/>
            <person name="Wang W."/>
            <person name="Wang J."/>
            <person name="Qian W."/>
            <person name="Li D."/>
            <person name="Wang L."/>
        </authorList>
    </citation>
    <scope>NUCLEOTIDE SEQUENCE [LARGE SCALE GENOMIC DNA]</scope>
    <source>
        <strain>M66-2</strain>
    </source>
</reference>
<protein>
    <recommendedName>
        <fullName evidence="1">Mannitol-1-phosphate 5-dehydrogenase</fullName>
        <ecNumber evidence="1">1.1.1.17</ecNumber>
    </recommendedName>
</protein>
<sequence>MKKNAVHFGAGNIGRGFIGKLLADADIAVTFADVNEPLVDQLSHQQEYKVKVVGSECKMETVSHVTAVNSASEALIERIIKTDLVTTAVGPTVLDIIAKTIAKGLSARFAAGNTQPLNIIACENMVRGTTHLKQQVYQFLTTEEQQQADALVGFVDSAVDRIVPPLQAANDDPLEVTVESFSEWIVDEQQFKGEIPQIEGMEKTDNLMAFVERKLFTLNTGHCVTAYLGCLKGHRTIREAIEDPCIHAQVKQAMQESGEVLIRRYGFDRALHSAYIEKILSRFANPYLVDEVDRVGRQPLRKLSANDRLIKPLLGTIEYGLPNGMLLKGIAAALKYRNSSDPQAVELQQSIEKEGVRSTLARYTGLAAESVEAQQIEALYQQMD</sequence>
<organism>
    <name type="scientific">Vibrio cholerae serotype O1 (strain M66-2)</name>
    <dbReference type="NCBI Taxonomy" id="579112"/>
    <lineage>
        <taxon>Bacteria</taxon>
        <taxon>Pseudomonadati</taxon>
        <taxon>Pseudomonadota</taxon>
        <taxon>Gammaproteobacteria</taxon>
        <taxon>Vibrionales</taxon>
        <taxon>Vibrionaceae</taxon>
        <taxon>Vibrio</taxon>
    </lineage>
</organism>
<comment type="catalytic activity">
    <reaction evidence="1">
        <text>D-mannitol 1-phosphate + NAD(+) = beta-D-fructose 6-phosphate + NADH + H(+)</text>
        <dbReference type="Rhea" id="RHEA:19661"/>
        <dbReference type="ChEBI" id="CHEBI:15378"/>
        <dbReference type="ChEBI" id="CHEBI:57540"/>
        <dbReference type="ChEBI" id="CHEBI:57634"/>
        <dbReference type="ChEBI" id="CHEBI:57945"/>
        <dbReference type="ChEBI" id="CHEBI:61381"/>
        <dbReference type="EC" id="1.1.1.17"/>
    </reaction>
</comment>
<comment type="similarity">
    <text evidence="1">Belongs to the mannitol dehydrogenase family.</text>
</comment>
<evidence type="ECO:0000255" key="1">
    <source>
        <dbReference type="HAMAP-Rule" id="MF_00196"/>
    </source>
</evidence>
<name>MTLD_VIBCM</name>
<proteinExistence type="inferred from homology"/>